<name>FOLD_SALAR</name>
<protein>
    <recommendedName>
        <fullName evidence="1">Bifunctional protein FolD</fullName>
    </recommendedName>
    <domain>
        <recommendedName>
            <fullName evidence="1">Methylenetetrahydrofolate dehydrogenase</fullName>
            <ecNumber evidence="1">1.5.1.5</ecNumber>
        </recommendedName>
    </domain>
    <domain>
        <recommendedName>
            <fullName evidence="1">Methenyltetrahydrofolate cyclohydrolase</fullName>
            <ecNumber evidence="1">3.5.4.9</ecNumber>
        </recommendedName>
    </domain>
</protein>
<comment type="function">
    <text evidence="1">Catalyzes the oxidation of 5,10-methylenetetrahydrofolate to 5,10-methenyltetrahydrofolate and then the hydrolysis of 5,10-methenyltetrahydrofolate to 10-formyltetrahydrofolate.</text>
</comment>
<comment type="catalytic activity">
    <reaction evidence="1">
        <text>(6R)-5,10-methylene-5,6,7,8-tetrahydrofolate + NADP(+) = (6R)-5,10-methenyltetrahydrofolate + NADPH</text>
        <dbReference type="Rhea" id="RHEA:22812"/>
        <dbReference type="ChEBI" id="CHEBI:15636"/>
        <dbReference type="ChEBI" id="CHEBI:57455"/>
        <dbReference type="ChEBI" id="CHEBI:57783"/>
        <dbReference type="ChEBI" id="CHEBI:58349"/>
        <dbReference type="EC" id="1.5.1.5"/>
    </reaction>
</comment>
<comment type="catalytic activity">
    <reaction evidence="1">
        <text>(6R)-5,10-methenyltetrahydrofolate + H2O = (6R)-10-formyltetrahydrofolate + H(+)</text>
        <dbReference type="Rhea" id="RHEA:23700"/>
        <dbReference type="ChEBI" id="CHEBI:15377"/>
        <dbReference type="ChEBI" id="CHEBI:15378"/>
        <dbReference type="ChEBI" id="CHEBI:57455"/>
        <dbReference type="ChEBI" id="CHEBI:195366"/>
        <dbReference type="EC" id="3.5.4.9"/>
    </reaction>
</comment>
<comment type="pathway">
    <text evidence="1">One-carbon metabolism; tetrahydrofolate interconversion.</text>
</comment>
<comment type="subunit">
    <text evidence="1">Homodimer.</text>
</comment>
<comment type="similarity">
    <text evidence="1">Belongs to the tetrahydrofolate dehydrogenase/cyclohydrolase family.</text>
</comment>
<evidence type="ECO:0000255" key="1">
    <source>
        <dbReference type="HAMAP-Rule" id="MF_01576"/>
    </source>
</evidence>
<accession>A9MLA4</accession>
<proteinExistence type="inferred from homology"/>
<gene>
    <name evidence="1" type="primary">folD</name>
    <name type="ordered locus">SARI_02412</name>
</gene>
<keyword id="KW-0028">Amino-acid biosynthesis</keyword>
<keyword id="KW-0368">Histidine biosynthesis</keyword>
<keyword id="KW-0378">Hydrolase</keyword>
<keyword id="KW-0486">Methionine biosynthesis</keyword>
<keyword id="KW-0511">Multifunctional enzyme</keyword>
<keyword id="KW-0521">NADP</keyword>
<keyword id="KW-0554">One-carbon metabolism</keyword>
<keyword id="KW-0560">Oxidoreductase</keyword>
<keyword id="KW-0658">Purine biosynthesis</keyword>
<keyword id="KW-1185">Reference proteome</keyword>
<sequence>MAAKIIDGKTIAQQVRSEVAQKVQARVAAGLRAPGLAVVLVGSNPASQIYVASKRKACDEVGFVSRSYDLPETTSEAELLELIDTLNADSTIDGILVQLPLPAGIDNVKVLERIAPDKDVDGFHPYNVGRLCQRAPRLRPCTPRGIVTLLERYNIDTYGLNAVVIGASNIVGRPMSMELLLAGCTTTVTHRFTKDLRHHVEHADLLIVAVGKPGFIPGEWIKEGAIVIDVGINRLENGKVVGDVVFEEAAARASYITPVPGGVGPMTVATLIENTLQACTEYHDPQGK</sequence>
<dbReference type="EC" id="1.5.1.5" evidence="1"/>
<dbReference type="EC" id="3.5.4.9" evidence="1"/>
<dbReference type="EMBL" id="CP000880">
    <property type="protein sequence ID" value="ABX22274.1"/>
    <property type="molecule type" value="Genomic_DNA"/>
</dbReference>
<dbReference type="SMR" id="A9MLA4"/>
<dbReference type="STRING" id="41514.SARI_02412"/>
<dbReference type="KEGG" id="ses:SARI_02412"/>
<dbReference type="HOGENOM" id="CLU_034045_2_1_6"/>
<dbReference type="UniPathway" id="UPA00193"/>
<dbReference type="Proteomes" id="UP000002084">
    <property type="component" value="Chromosome"/>
</dbReference>
<dbReference type="GO" id="GO:0005829">
    <property type="term" value="C:cytosol"/>
    <property type="evidence" value="ECO:0007669"/>
    <property type="project" value="TreeGrafter"/>
</dbReference>
<dbReference type="GO" id="GO:0004477">
    <property type="term" value="F:methenyltetrahydrofolate cyclohydrolase activity"/>
    <property type="evidence" value="ECO:0007669"/>
    <property type="project" value="UniProtKB-UniRule"/>
</dbReference>
<dbReference type="GO" id="GO:0004488">
    <property type="term" value="F:methylenetetrahydrofolate dehydrogenase (NADP+) activity"/>
    <property type="evidence" value="ECO:0007669"/>
    <property type="project" value="UniProtKB-UniRule"/>
</dbReference>
<dbReference type="GO" id="GO:0000105">
    <property type="term" value="P:L-histidine biosynthetic process"/>
    <property type="evidence" value="ECO:0007669"/>
    <property type="project" value="UniProtKB-KW"/>
</dbReference>
<dbReference type="GO" id="GO:0009086">
    <property type="term" value="P:methionine biosynthetic process"/>
    <property type="evidence" value="ECO:0007669"/>
    <property type="project" value="UniProtKB-KW"/>
</dbReference>
<dbReference type="GO" id="GO:0006164">
    <property type="term" value="P:purine nucleotide biosynthetic process"/>
    <property type="evidence" value="ECO:0007669"/>
    <property type="project" value="UniProtKB-KW"/>
</dbReference>
<dbReference type="GO" id="GO:0035999">
    <property type="term" value="P:tetrahydrofolate interconversion"/>
    <property type="evidence" value="ECO:0007669"/>
    <property type="project" value="UniProtKB-UniRule"/>
</dbReference>
<dbReference type="CDD" id="cd01080">
    <property type="entry name" value="NAD_bind_m-THF_DH_Cyclohyd"/>
    <property type="match status" value="1"/>
</dbReference>
<dbReference type="FunFam" id="3.40.50.10860:FF:000001">
    <property type="entry name" value="Bifunctional protein FolD"/>
    <property type="match status" value="1"/>
</dbReference>
<dbReference type="FunFam" id="3.40.50.720:FF:000006">
    <property type="entry name" value="Bifunctional protein FolD"/>
    <property type="match status" value="1"/>
</dbReference>
<dbReference type="Gene3D" id="3.40.50.10860">
    <property type="entry name" value="Leucine Dehydrogenase, chain A, domain 1"/>
    <property type="match status" value="1"/>
</dbReference>
<dbReference type="Gene3D" id="3.40.50.720">
    <property type="entry name" value="NAD(P)-binding Rossmann-like Domain"/>
    <property type="match status" value="1"/>
</dbReference>
<dbReference type="HAMAP" id="MF_01576">
    <property type="entry name" value="THF_DHG_CYH"/>
    <property type="match status" value="1"/>
</dbReference>
<dbReference type="InterPro" id="IPR046346">
    <property type="entry name" value="Aminoacid_DH-like_N_sf"/>
</dbReference>
<dbReference type="InterPro" id="IPR036291">
    <property type="entry name" value="NAD(P)-bd_dom_sf"/>
</dbReference>
<dbReference type="InterPro" id="IPR000672">
    <property type="entry name" value="THF_DH/CycHdrlase"/>
</dbReference>
<dbReference type="InterPro" id="IPR020630">
    <property type="entry name" value="THF_DH/CycHdrlase_cat_dom"/>
</dbReference>
<dbReference type="InterPro" id="IPR020867">
    <property type="entry name" value="THF_DH/CycHdrlase_CS"/>
</dbReference>
<dbReference type="InterPro" id="IPR020631">
    <property type="entry name" value="THF_DH/CycHdrlase_NAD-bd_dom"/>
</dbReference>
<dbReference type="NCBIfam" id="NF008058">
    <property type="entry name" value="PRK10792.1"/>
    <property type="match status" value="1"/>
</dbReference>
<dbReference type="NCBIfam" id="NF010783">
    <property type="entry name" value="PRK14186.1"/>
    <property type="match status" value="1"/>
</dbReference>
<dbReference type="PANTHER" id="PTHR48099:SF5">
    <property type="entry name" value="C-1-TETRAHYDROFOLATE SYNTHASE, CYTOPLASMIC"/>
    <property type="match status" value="1"/>
</dbReference>
<dbReference type="PANTHER" id="PTHR48099">
    <property type="entry name" value="C-1-TETRAHYDROFOLATE SYNTHASE, CYTOPLASMIC-RELATED"/>
    <property type="match status" value="1"/>
</dbReference>
<dbReference type="Pfam" id="PF00763">
    <property type="entry name" value="THF_DHG_CYH"/>
    <property type="match status" value="1"/>
</dbReference>
<dbReference type="Pfam" id="PF02882">
    <property type="entry name" value="THF_DHG_CYH_C"/>
    <property type="match status" value="1"/>
</dbReference>
<dbReference type="PRINTS" id="PR00085">
    <property type="entry name" value="THFDHDRGNASE"/>
</dbReference>
<dbReference type="SUPFAM" id="SSF53223">
    <property type="entry name" value="Aminoacid dehydrogenase-like, N-terminal domain"/>
    <property type="match status" value="1"/>
</dbReference>
<dbReference type="SUPFAM" id="SSF51735">
    <property type="entry name" value="NAD(P)-binding Rossmann-fold domains"/>
    <property type="match status" value="1"/>
</dbReference>
<dbReference type="PROSITE" id="PS00766">
    <property type="entry name" value="THF_DHG_CYH_1"/>
    <property type="match status" value="1"/>
</dbReference>
<dbReference type="PROSITE" id="PS00767">
    <property type="entry name" value="THF_DHG_CYH_2"/>
    <property type="match status" value="1"/>
</dbReference>
<reference key="1">
    <citation type="submission" date="2007-11" db="EMBL/GenBank/DDBJ databases">
        <authorList>
            <consortium name="The Salmonella enterica serovar Arizonae Genome Sequencing Project"/>
            <person name="McClelland M."/>
            <person name="Sanderson E.K."/>
            <person name="Porwollik S."/>
            <person name="Spieth J."/>
            <person name="Clifton W.S."/>
            <person name="Fulton R."/>
            <person name="Chunyan W."/>
            <person name="Wollam A."/>
            <person name="Shah N."/>
            <person name="Pepin K."/>
            <person name="Bhonagiri V."/>
            <person name="Nash W."/>
            <person name="Johnson M."/>
            <person name="Thiruvilangam P."/>
            <person name="Wilson R."/>
        </authorList>
    </citation>
    <scope>NUCLEOTIDE SEQUENCE [LARGE SCALE GENOMIC DNA]</scope>
    <source>
        <strain>ATCC BAA-731 / CDC346-86 / RSK2980</strain>
    </source>
</reference>
<feature type="chain" id="PRO_1000087915" description="Bifunctional protein FolD">
    <location>
        <begin position="1"/>
        <end position="288"/>
    </location>
</feature>
<feature type="binding site" evidence="1">
    <location>
        <begin position="166"/>
        <end position="168"/>
    </location>
    <ligand>
        <name>NADP(+)</name>
        <dbReference type="ChEBI" id="CHEBI:58349"/>
    </ligand>
</feature>
<feature type="binding site" evidence="1">
    <location>
        <position position="232"/>
    </location>
    <ligand>
        <name>NADP(+)</name>
        <dbReference type="ChEBI" id="CHEBI:58349"/>
    </ligand>
</feature>
<organism>
    <name type="scientific">Salmonella arizonae (strain ATCC BAA-731 / CDC346-86 / RSK2980)</name>
    <dbReference type="NCBI Taxonomy" id="41514"/>
    <lineage>
        <taxon>Bacteria</taxon>
        <taxon>Pseudomonadati</taxon>
        <taxon>Pseudomonadota</taxon>
        <taxon>Gammaproteobacteria</taxon>
        <taxon>Enterobacterales</taxon>
        <taxon>Enterobacteriaceae</taxon>
        <taxon>Salmonella</taxon>
    </lineage>
</organism>